<comment type="function">
    <text evidence="1">Catalyzes the conversion of uracil and 5-phospho-alpha-D-ribose 1-diphosphate (PRPP) to UMP and diphosphate.</text>
</comment>
<comment type="catalytic activity">
    <reaction evidence="1">
        <text>UMP + diphosphate = 5-phospho-alpha-D-ribose 1-diphosphate + uracil</text>
        <dbReference type="Rhea" id="RHEA:13017"/>
        <dbReference type="ChEBI" id="CHEBI:17568"/>
        <dbReference type="ChEBI" id="CHEBI:33019"/>
        <dbReference type="ChEBI" id="CHEBI:57865"/>
        <dbReference type="ChEBI" id="CHEBI:58017"/>
        <dbReference type="EC" id="2.4.2.9"/>
    </reaction>
</comment>
<comment type="cofactor">
    <cofactor evidence="1">
        <name>Mg(2+)</name>
        <dbReference type="ChEBI" id="CHEBI:18420"/>
    </cofactor>
    <text evidence="1">Binds 1 Mg(2+) ion per subunit. The magnesium is bound as Mg-PRPP.</text>
</comment>
<comment type="activity regulation">
    <text evidence="1">Allosterically activated by GTP.</text>
</comment>
<comment type="pathway">
    <text evidence="1">Pyrimidine metabolism; UMP biosynthesis via salvage pathway; UMP from uracil: step 1/1.</text>
</comment>
<comment type="similarity">
    <text evidence="1">Belongs to the UPRTase family.</text>
</comment>
<accession>A0RR59</accession>
<protein>
    <recommendedName>
        <fullName evidence="1">Uracil phosphoribosyltransferase</fullName>
        <ecNumber evidence="1">2.4.2.9</ecNumber>
    </recommendedName>
    <alternativeName>
        <fullName evidence="1">UMP pyrophosphorylase</fullName>
    </alternativeName>
    <alternativeName>
        <fullName evidence="1">UPRTase</fullName>
    </alternativeName>
</protein>
<feature type="chain" id="PRO_1000053696" description="Uracil phosphoribosyltransferase">
    <location>
        <begin position="1"/>
        <end position="209"/>
    </location>
</feature>
<feature type="binding site" evidence="1">
    <location>
        <position position="78"/>
    </location>
    <ligand>
        <name>5-phospho-alpha-D-ribose 1-diphosphate</name>
        <dbReference type="ChEBI" id="CHEBI:58017"/>
    </ligand>
</feature>
<feature type="binding site" evidence="1">
    <location>
        <position position="103"/>
    </location>
    <ligand>
        <name>5-phospho-alpha-D-ribose 1-diphosphate</name>
        <dbReference type="ChEBI" id="CHEBI:58017"/>
    </ligand>
</feature>
<feature type="binding site" evidence="1">
    <location>
        <begin position="130"/>
        <end position="138"/>
    </location>
    <ligand>
        <name>5-phospho-alpha-D-ribose 1-diphosphate</name>
        <dbReference type="ChEBI" id="CHEBI:58017"/>
    </ligand>
</feature>
<feature type="binding site" evidence="1">
    <location>
        <position position="193"/>
    </location>
    <ligand>
        <name>uracil</name>
        <dbReference type="ChEBI" id="CHEBI:17568"/>
    </ligand>
</feature>
<feature type="binding site" evidence="1">
    <location>
        <begin position="198"/>
        <end position="200"/>
    </location>
    <ligand>
        <name>uracil</name>
        <dbReference type="ChEBI" id="CHEBI:17568"/>
    </ligand>
</feature>
<feature type="binding site" evidence="1">
    <location>
        <position position="199"/>
    </location>
    <ligand>
        <name>5-phospho-alpha-D-ribose 1-diphosphate</name>
        <dbReference type="ChEBI" id="CHEBI:58017"/>
    </ligand>
</feature>
<name>UPP_CAMFF</name>
<evidence type="ECO:0000255" key="1">
    <source>
        <dbReference type="HAMAP-Rule" id="MF_01218"/>
    </source>
</evidence>
<dbReference type="EC" id="2.4.2.9" evidence="1"/>
<dbReference type="EMBL" id="CP000487">
    <property type="protein sequence ID" value="ABK82819.1"/>
    <property type="molecule type" value="Genomic_DNA"/>
</dbReference>
<dbReference type="RefSeq" id="WP_002850580.1">
    <property type="nucleotide sequence ID" value="NC_008599.1"/>
</dbReference>
<dbReference type="SMR" id="A0RR59"/>
<dbReference type="GeneID" id="61065376"/>
<dbReference type="KEGG" id="cff:CFF8240_1559"/>
<dbReference type="eggNOG" id="COG0035">
    <property type="taxonomic scope" value="Bacteria"/>
</dbReference>
<dbReference type="HOGENOM" id="CLU_067096_2_2_7"/>
<dbReference type="UniPathway" id="UPA00574">
    <property type="reaction ID" value="UER00636"/>
</dbReference>
<dbReference type="Proteomes" id="UP000000760">
    <property type="component" value="Chromosome"/>
</dbReference>
<dbReference type="GO" id="GO:0005525">
    <property type="term" value="F:GTP binding"/>
    <property type="evidence" value="ECO:0007669"/>
    <property type="project" value="UniProtKB-KW"/>
</dbReference>
<dbReference type="GO" id="GO:0000287">
    <property type="term" value="F:magnesium ion binding"/>
    <property type="evidence" value="ECO:0007669"/>
    <property type="project" value="UniProtKB-UniRule"/>
</dbReference>
<dbReference type="GO" id="GO:0004845">
    <property type="term" value="F:uracil phosphoribosyltransferase activity"/>
    <property type="evidence" value="ECO:0007669"/>
    <property type="project" value="UniProtKB-UniRule"/>
</dbReference>
<dbReference type="GO" id="GO:0044206">
    <property type="term" value="P:UMP salvage"/>
    <property type="evidence" value="ECO:0007669"/>
    <property type="project" value="UniProtKB-UniRule"/>
</dbReference>
<dbReference type="GO" id="GO:0006223">
    <property type="term" value="P:uracil salvage"/>
    <property type="evidence" value="ECO:0007669"/>
    <property type="project" value="InterPro"/>
</dbReference>
<dbReference type="CDD" id="cd06223">
    <property type="entry name" value="PRTases_typeI"/>
    <property type="match status" value="1"/>
</dbReference>
<dbReference type="FunFam" id="3.40.50.2020:FF:000003">
    <property type="entry name" value="Uracil phosphoribosyltransferase"/>
    <property type="match status" value="1"/>
</dbReference>
<dbReference type="Gene3D" id="3.40.50.2020">
    <property type="match status" value="1"/>
</dbReference>
<dbReference type="HAMAP" id="MF_01218_B">
    <property type="entry name" value="Upp_B"/>
    <property type="match status" value="1"/>
</dbReference>
<dbReference type="InterPro" id="IPR000836">
    <property type="entry name" value="PRibTrfase_dom"/>
</dbReference>
<dbReference type="InterPro" id="IPR029057">
    <property type="entry name" value="PRTase-like"/>
</dbReference>
<dbReference type="InterPro" id="IPR034332">
    <property type="entry name" value="Upp_B"/>
</dbReference>
<dbReference type="InterPro" id="IPR050054">
    <property type="entry name" value="UPRTase/APRTase"/>
</dbReference>
<dbReference type="InterPro" id="IPR005765">
    <property type="entry name" value="Ura_phspho_trans"/>
</dbReference>
<dbReference type="NCBIfam" id="NF001097">
    <property type="entry name" value="PRK00129.1"/>
    <property type="match status" value="1"/>
</dbReference>
<dbReference type="NCBIfam" id="TIGR01091">
    <property type="entry name" value="upp"/>
    <property type="match status" value="1"/>
</dbReference>
<dbReference type="PANTHER" id="PTHR32315">
    <property type="entry name" value="ADENINE PHOSPHORIBOSYLTRANSFERASE"/>
    <property type="match status" value="1"/>
</dbReference>
<dbReference type="PANTHER" id="PTHR32315:SF4">
    <property type="entry name" value="URACIL PHOSPHORIBOSYLTRANSFERASE, CHLOROPLASTIC"/>
    <property type="match status" value="1"/>
</dbReference>
<dbReference type="Pfam" id="PF14681">
    <property type="entry name" value="UPRTase"/>
    <property type="match status" value="1"/>
</dbReference>
<dbReference type="SUPFAM" id="SSF53271">
    <property type="entry name" value="PRTase-like"/>
    <property type="match status" value="1"/>
</dbReference>
<sequence length="209" mass="23531">MQNIRLISHPLIEHKLTILRDKNTDPFQFRMLIDEITYLMLFEASRDFELKDTEVITPVATTKSKKLAQKIMICPILRAALGMLGSVFKLLPDASVGFLGFQRDEKTLKAEFYYAKLPKDHAERIAIVIDPMFATGGTAIDAVRFLKEKGVKKIKFISILAAPEGLNRFSEVYPDVEVYTAAIDRGLNEKGYIIPGLGDAGDRVFNTVY</sequence>
<organism>
    <name type="scientific">Campylobacter fetus subsp. fetus (strain 82-40)</name>
    <dbReference type="NCBI Taxonomy" id="360106"/>
    <lineage>
        <taxon>Bacteria</taxon>
        <taxon>Pseudomonadati</taxon>
        <taxon>Campylobacterota</taxon>
        <taxon>Epsilonproteobacteria</taxon>
        <taxon>Campylobacterales</taxon>
        <taxon>Campylobacteraceae</taxon>
        <taxon>Campylobacter</taxon>
    </lineage>
</organism>
<reference key="1">
    <citation type="submission" date="2006-11" db="EMBL/GenBank/DDBJ databases">
        <title>Sequence of Campylobacter fetus subsp. fetus 82-40.</title>
        <authorList>
            <person name="Fouts D.E."/>
            <person name="Nelson K.E."/>
        </authorList>
    </citation>
    <scope>NUCLEOTIDE SEQUENCE [LARGE SCALE GENOMIC DNA]</scope>
    <source>
        <strain>82-40</strain>
    </source>
</reference>
<keyword id="KW-0021">Allosteric enzyme</keyword>
<keyword id="KW-0328">Glycosyltransferase</keyword>
<keyword id="KW-0342">GTP-binding</keyword>
<keyword id="KW-0460">Magnesium</keyword>
<keyword id="KW-0547">Nucleotide-binding</keyword>
<keyword id="KW-0808">Transferase</keyword>
<gene>
    <name evidence="1" type="primary">upp</name>
    <name type="ordered locus">CFF8240_1559</name>
</gene>
<proteinExistence type="inferred from homology"/>